<name>KDPC_CERSK</name>
<protein>
    <recommendedName>
        <fullName evidence="1">Potassium-transporting ATPase KdpC subunit</fullName>
    </recommendedName>
    <alternativeName>
        <fullName evidence="1">ATP phosphohydrolase [potassium-transporting] C chain</fullName>
    </alternativeName>
    <alternativeName>
        <fullName evidence="1">Potassium-binding and translocating subunit C</fullName>
    </alternativeName>
    <alternativeName>
        <fullName evidence="1">Potassium-translocating ATPase C chain</fullName>
    </alternativeName>
</protein>
<feature type="chain" id="PRO_1000132524" description="Potassium-transporting ATPase KdpC subunit">
    <location>
        <begin position="1"/>
        <end position="185"/>
    </location>
</feature>
<feature type="transmembrane region" description="Helical" evidence="1">
    <location>
        <begin position="14"/>
        <end position="34"/>
    </location>
</feature>
<sequence>MMTHLRPALASLLALSLLTGVAYPLALTGIAAVIAPDRAAGSLILREGQVVGSALIGQGFEGPGYLHPRPSASDWNAAGTSASNLGPTSAALLAQVQERQAAYEAQNGASAPVDAVTASGSGLDPHVSPANARAQAGRIARARGLEEAAVRRLIEAHVEPPLLGLWGQARVNVLAVNLALDAAGA</sequence>
<evidence type="ECO:0000255" key="1">
    <source>
        <dbReference type="HAMAP-Rule" id="MF_00276"/>
    </source>
</evidence>
<gene>
    <name evidence="1" type="primary">kdpC</name>
    <name type="ordered locus">RSKD131_2665</name>
</gene>
<dbReference type="EMBL" id="CP001150">
    <property type="protein sequence ID" value="ACM02525.1"/>
    <property type="molecule type" value="Genomic_DNA"/>
</dbReference>
<dbReference type="RefSeq" id="WP_015921581.1">
    <property type="nucleotide sequence ID" value="NC_011963.1"/>
</dbReference>
<dbReference type="SMR" id="B9KPZ0"/>
<dbReference type="GeneID" id="67448037"/>
<dbReference type="KEGG" id="rsk:RSKD131_2665"/>
<dbReference type="HOGENOM" id="CLU_077094_2_0_5"/>
<dbReference type="GO" id="GO:0005886">
    <property type="term" value="C:plasma membrane"/>
    <property type="evidence" value="ECO:0007669"/>
    <property type="project" value="UniProtKB-SubCell"/>
</dbReference>
<dbReference type="GO" id="GO:0005524">
    <property type="term" value="F:ATP binding"/>
    <property type="evidence" value="ECO:0007669"/>
    <property type="project" value="UniProtKB-UniRule"/>
</dbReference>
<dbReference type="GO" id="GO:0008556">
    <property type="term" value="F:P-type potassium transmembrane transporter activity"/>
    <property type="evidence" value="ECO:0007669"/>
    <property type="project" value="InterPro"/>
</dbReference>
<dbReference type="HAMAP" id="MF_00276">
    <property type="entry name" value="KdpC"/>
    <property type="match status" value="1"/>
</dbReference>
<dbReference type="InterPro" id="IPR003820">
    <property type="entry name" value="KdpC"/>
</dbReference>
<dbReference type="NCBIfam" id="TIGR00681">
    <property type="entry name" value="kdpC"/>
    <property type="match status" value="1"/>
</dbReference>
<dbReference type="NCBIfam" id="NF001454">
    <property type="entry name" value="PRK00315.1"/>
    <property type="match status" value="1"/>
</dbReference>
<dbReference type="PANTHER" id="PTHR30042">
    <property type="entry name" value="POTASSIUM-TRANSPORTING ATPASE C CHAIN"/>
    <property type="match status" value="1"/>
</dbReference>
<dbReference type="PANTHER" id="PTHR30042:SF2">
    <property type="entry name" value="POTASSIUM-TRANSPORTING ATPASE KDPC SUBUNIT"/>
    <property type="match status" value="1"/>
</dbReference>
<dbReference type="Pfam" id="PF02669">
    <property type="entry name" value="KdpC"/>
    <property type="match status" value="1"/>
</dbReference>
<dbReference type="PIRSF" id="PIRSF001296">
    <property type="entry name" value="K_ATPase_KdpC"/>
    <property type="match status" value="1"/>
</dbReference>
<organism>
    <name type="scientific">Cereibacter sphaeroides (strain KD131 / KCTC 12085)</name>
    <name type="common">Rhodobacter sphaeroides</name>
    <dbReference type="NCBI Taxonomy" id="557760"/>
    <lineage>
        <taxon>Bacteria</taxon>
        <taxon>Pseudomonadati</taxon>
        <taxon>Pseudomonadota</taxon>
        <taxon>Alphaproteobacteria</taxon>
        <taxon>Rhodobacterales</taxon>
        <taxon>Paracoccaceae</taxon>
        <taxon>Cereibacter</taxon>
    </lineage>
</organism>
<reference key="1">
    <citation type="journal article" date="2009" name="J. Bacteriol.">
        <title>Complete genome sequence of Rhodobacter sphaeroides KD131.</title>
        <authorList>
            <person name="Lim S.-K."/>
            <person name="Kim S.J."/>
            <person name="Cha S.H."/>
            <person name="Oh Y.-K."/>
            <person name="Rhee H.-J."/>
            <person name="Kim M.-S."/>
            <person name="Lee J.K."/>
        </authorList>
    </citation>
    <scope>NUCLEOTIDE SEQUENCE [LARGE SCALE GENOMIC DNA]</scope>
    <source>
        <strain>KD131 / KCTC 12085</strain>
    </source>
</reference>
<accession>B9KPZ0</accession>
<keyword id="KW-0067">ATP-binding</keyword>
<keyword id="KW-0997">Cell inner membrane</keyword>
<keyword id="KW-1003">Cell membrane</keyword>
<keyword id="KW-0406">Ion transport</keyword>
<keyword id="KW-0472">Membrane</keyword>
<keyword id="KW-0547">Nucleotide-binding</keyword>
<keyword id="KW-0630">Potassium</keyword>
<keyword id="KW-0633">Potassium transport</keyword>
<keyword id="KW-0812">Transmembrane</keyword>
<keyword id="KW-1133">Transmembrane helix</keyword>
<keyword id="KW-0813">Transport</keyword>
<proteinExistence type="inferred from homology"/>
<comment type="function">
    <text evidence="1">Part of the high-affinity ATP-driven potassium transport (or Kdp) system, which catalyzes the hydrolysis of ATP coupled with the electrogenic transport of potassium into the cytoplasm. This subunit acts as a catalytic chaperone that increases the ATP-binding affinity of the ATP-hydrolyzing subunit KdpB by the formation of a transient KdpB/KdpC/ATP ternary complex.</text>
</comment>
<comment type="subunit">
    <text evidence="1">The system is composed of three essential subunits: KdpA, KdpB and KdpC.</text>
</comment>
<comment type="subcellular location">
    <subcellularLocation>
        <location evidence="1">Cell inner membrane</location>
        <topology evidence="1">Single-pass membrane protein</topology>
    </subcellularLocation>
</comment>
<comment type="similarity">
    <text evidence="1">Belongs to the KdpC family.</text>
</comment>